<protein>
    <recommendedName>
        <fullName evidence="3">Large ribosomal subunit protein bL35m</fullName>
    </recommendedName>
    <alternativeName>
        <fullName>39S ribosomal protein L35, mitochondrial</fullName>
        <shortName>L35mt</shortName>
        <shortName>MRP-L35</shortName>
    </alternativeName>
</protein>
<proteinExistence type="evidence at transcript level"/>
<evidence type="ECO:0000250" key="1"/>
<evidence type="ECO:0000255" key="2"/>
<evidence type="ECO:0000305" key="3"/>
<reference key="1">
    <citation type="journal article" date="2005" name="Science">
        <title>The transcriptional landscape of the mammalian genome.</title>
        <authorList>
            <person name="Carninci P."/>
            <person name="Kasukawa T."/>
            <person name="Katayama S."/>
            <person name="Gough J."/>
            <person name="Frith M.C."/>
            <person name="Maeda N."/>
            <person name="Oyama R."/>
            <person name="Ravasi T."/>
            <person name="Lenhard B."/>
            <person name="Wells C."/>
            <person name="Kodzius R."/>
            <person name="Shimokawa K."/>
            <person name="Bajic V.B."/>
            <person name="Brenner S.E."/>
            <person name="Batalov S."/>
            <person name="Forrest A.R."/>
            <person name="Zavolan M."/>
            <person name="Davis M.J."/>
            <person name="Wilming L.G."/>
            <person name="Aidinis V."/>
            <person name="Allen J.E."/>
            <person name="Ambesi-Impiombato A."/>
            <person name="Apweiler R."/>
            <person name="Aturaliya R.N."/>
            <person name="Bailey T.L."/>
            <person name="Bansal M."/>
            <person name="Baxter L."/>
            <person name="Beisel K.W."/>
            <person name="Bersano T."/>
            <person name="Bono H."/>
            <person name="Chalk A.M."/>
            <person name="Chiu K.P."/>
            <person name="Choudhary V."/>
            <person name="Christoffels A."/>
            <person name="Clutterbuck D.R."/>
            <person name="Crowe M.L."/>
            <person name="Dalla E."/>
            <person name="Dalrymple B.P."/>
            <person name="de Bono B."/>
            <person name="Della Gatta G."/>
            <person name="di Bernardo D."/>
            <person name="Down T."/>
            <person name="Engstrom P."/>
            <person name="Fagiolini M."/>
            <person name="Faulkner G."/>
            <person name="Fletcher C.F."/>
            <person name="Fukushima T."/>
            <person name="Furuno M."/>
            <person name="Futaki S."/>
            <person name="Gariboldi M."/>
            <person name="Georgii-Hemming P."/>
            <person name="Gingeras T.R."/>
            <person name="Gojobori T."/>
            <person name="Green R.E."/>
            <person name="Gustincich S."/>
            <person name="Harbers M."/>
            <person name="Hayashi Y."/>
            <person name="Hensch T.K."/>
            <person name="Hirokawa N."/>
            <person name="Hill D."/>
            <person name="Huminiecki L."/>
            <person name="Iacono M."/>
            <person name="Ikeo K."/>
            <person name="Iwama A."/>
            <person name="Ishikawa T."/>
            <person name="Jakt M."/>
            <person name="Kanapin A."/>
            <person name="Katoh M."/>
            <person name="Kawasawa Y."/>
            <person name="Kelso J."/>
            <person name="Kitamura H."/>
            <person name="Kitano H."/>
            <person name="Kollias G."/>
            <person name="Krishnan S.P."/>
            <person name="Kruger A."/>
            <person name="Kummerfeld S.K."/>
            <person name="Kurochkin I.V."/>
            <person name="Lareau L.F."/>
            <person name="Lazarevic D."/>
            <person name="Lipovich L."/>
            <person name="Liu J."/>
            <person name="Liuni S."/>
            <person name="McWilliam S."/>
            <person name="Madan Babu M."/>
            <person name="Madera M."/>
            <person name="Marchionni L."/>
            <person name="Matsuda H."/>
            <person name="Matsuzawa S."/>
            <person name="Miki H."/>
            <person name="Mignone F."/>
            <person name="Miyake S."/>
            <person name="Morris K."/>
            <person name="Mottagui-Tabar S."/>
            <person name="Mulder N."/>
            <person name="Nakano N."/>
            <person name="Nakauchi H."/>
            <person name="Ng P."/>
            <person name="Nilsson R."/>
            <person name="Nishiguchi S."/>
            <person name="Nishikawa S."/>
            <person name="Nori F."/>
            <person name="Ohara O."/>
            <person name="Okazaki Y."/>
            <person name="Orlando V."/>
            <person name="Pang K.C."/>
            <person name="Pavan W.J."/>
            <person name="Pavesi G."/>
            <person name="Pesole G."/>
            <person name="Petrovsky N."/>
            <person name="Piazza S."/>
            <person name="Reed J."/>
            <person name="Reid J.F."/>
            <person name="Ring B.Z."/>
            <person name="Ringwald M."/>
            <person name="Rost B."/>
            <person name="Ruan Y."/>
            <person name="Salzberg S.L."/>
            <person name="Sandelin A."/>
            <person name="Schneider C."/>
            <person name="Schoenbach C."/>
            <person name="Sekiguchi K."/>
            <person name="Semple C.A."/>
            <person name="Seno S."/>
            <person name="Sessa L."/>
            <person name="Sheng Y."/>
            <person name="Shibata Y."/>
            <person name="Shimada H."/>
            <person name="Shimada K."/>
            <person name="Silva D."/>
            <person name="Sinclair B."/>
            <person name="Sperling S."/>
            <person name="Stupka E."/>
            <person name="Sugiura K."/>
            <person name="Sultana R."/>
            <person name="Takenaka Y."/>
            <person name="Taki K."/>
            <person name="Tammoja K."/>
            <person name="Tan S.L."/>
            <person name="Tang S."/>
            <person name="Taylor M.S."/>
            <person name="Tegner J."/>
            <person name="Teichmann S.A."/>
            <person name="Ueda H.R."/>
            <person name="van Nimwegen E."/>
            <person name="Verardo R."/>
            <person name="Wei C.L."/>
            <person name="Yagi K."/>
            <person name="Yamanishi H."/>
            <person name="Zabarovsky E."/>
            <person name="Zhu S."/>
            <person name="Zimmer A."/>
            <person name="Hide W."/>
            <person name="Bult C."/>
            <person name="Grimmond S.M."/>
            <person name="Teasdale R.D."/>
            <person name="Liu E.T."/>
            <person name="Brusic V."/>
            <person name="Quackenbush J."/>
            <person name="Wahlestedt C."/>
            <person name="Mattick J.S."/>
            <person name="Hume D.A."/>
            <person name="Kai C."/>
            <person name="Sasaki D."/>
            <person name="Tomaru Y."/>
            <person name="Fukuda S."/>
            <person name="Kanamori-Katayama M."/>
            <person name="Suzuki M."/>
            <person name="Aoki J."/>
            <person name="Arakawa T."/>
            <person name="Iida J."/>
            <person name="Imamura K."/>
            <person name="Itoh M."/>
            <person name="Kato T."/>
            <person name="Kawaji H."/>
            <person name="Kawagashira N."/>
            <person name="Kawashima T."/>
            <person name="Kojima M."/>
            <person name="Kondo S."/>
            <person name="Konno H."/>
            <person name="Nakano K."/>
            <person name="Ninomiya N."/>
            <person name="Nishio T."/>
            <person name="Okada M."/>
            <person name="Plessy C."/>
            <person name="Shibata K."/>
            <person name="Shiraki T."/>
            <person name="Suzuki S."/>
            <person name="Tagami M."/>
            <person name="Waki K."/>
            <person name="Watahiki A."/>
            <person name="Okamura-Oho Y."/>
            <person name="Suzuki H."/>
            <person name="Kawai J."/>
            <person name="Hayashizaki Y."/>
        </authorList>
    </citation>
    <scope>NUCLEOTIDE SEQUENCE [LARGE SCALE MRNA]</scope>
    <source>
        <strain>C57BL/6J</strain>
        <tissue>Embryo</tissue>
        <tissue>Embryonic stem cell</tissue>
        <tissue>Hypothalamus</tissue>
        <tissue>Tongue</tissue>
    </source>
</reference>
<reference key="2">
    <citation type="journal article" date="2004" name="Genome Res.">
        <title>The status, quality, and expansion of the NIH full-length cDNA project: the Mammalian Gene Collection (MGC).</title>
        <authorList>
            <consortium name="The MGC Project Team"/>
        </authorList>
    </citation>
    <scope>NUCLEOTIDE SEQUENCE [LARGE SCALE MRNA]</scope>
    <source>
        <tissue>Mammary gland</tissue>
    </source>
</reference>
<gene>
    <name type="primary">Mrpl35</name>
</gene>
<feature type="transit peptide" description="Mitochondrion" evidence="2">
    <location>
        <begin position="1"/>
        <end status="unknown"/>
    </location>
</feature>
<feature type="chain" id="PRO_0000030526" description="Large ribosomal subunit protein bL35m">
    <location>
        <begin status="unknown"/>
        <end position="188"/>
    </location>
</feature>
<sequence>MAASIFTGAVRAASGIFRPLNVLASSTYRNCARNACLNSSLCTIHFRHIQTSVVSSAPRLVTSVGHLAYGHTTTVLNRVATLVPSVLKPPVRALTYCSTRKGKRKTVKSVVHRFLRLHSGLWLRRKAGYKKKLWKKSTARKKRLREFVFCSKTQSKLLDKMTTSFWKRRNWYAGDPYQMYHDRTNLRV</sequence>
<name>RM35_MOUSE</name>
<accession>Q9CQL6</accession>
<keyword id="KW-0496">Mitochondrion</keyword>
<keyword id="KW-1185">Reference proteome</keyword>
<keyword id="KW-0687">Ribonucleoprotein</keyword>
<keyword id="KW-0689">Ribosomal protein</keyword>
<keyword id="KW-0809">Transit peptide</keyword>
<dbReference type="EMBL" id="AK004385">
    <property type="protein sequence ID" value="BAB23282.1"/>
    <property type="molecule type" value="mRNA"/>
</dbReference>
<dbReference type="EMBL" id="AK010223">
    <property type="protein sequence ID" value="BAB26778.1"/>
    <property type="molecule type" value="mRNA"/>
</dbReference>
<dbReference type="EMBL" id="AK010369">
    <property type="protein sequence ID" value="BAB26887.1"/>
    <property type="molecule type" value="mRNA"/>
</dbReference>
<dbReference type="EMBL" id="AK012807">
    <property type="protein sequence ID" value="BAB28485.1"/>
    <property type="molecule type" value="mRNA"/>
</dbReference>
<dbReference type="EMBL" id="AK039187">
    <property type="protein sequence ID" value="BAC30269.1"/>
    <property type="molecule type" value="mRNA"/>
</dbReference>
<dbReference type="EMBL" id="BC028750">
    <property type="protein sequence ID" value="AAH28750.1"/>
    <property type="molecule type" value="mRNA"/>
</dbReference>
<dbReference type="CCDS" id="CCDS20234.1"/>
<dbReference type="RefSeq" id="NP_079706.1">
    <property type="nucleotide sequence ID" value="NM_025430.3"/>
</dbReference>
<dbReference type="SMR" id="Q9CQL6"/>
<dbReference type="ComplexPortal" id="CPX-5302">
    <property type="entry name" value="39S mitochondrial large ribosomal subunit"/>
</dbReference>
<dbReference type="FunCoup" id="Q9CQL6">
    <property type="interactions" value="1299"/>
</dbReference>
<dbReference type="STRING" id="10090.ENSMUSP00000066493"/>
<dbReference type="iPTMnet" id="Q9CQL6"/>
<dbReference type="PhosphoSitePlus" id="Q9CQL6"/>
<dbReference type="PaxDb" id="10090-ENSMUSP00000066493"/>
<dbReference type="PeptideAtlas" id="Q9CQL6"/>
<dbReference type="ProteomicsDB" id="300401"/>
<dbReference type="Antibodypedia" id="51696">
    <property type="antibodies" value="40 antibodies from 17 providers"/>
</dbReference>
<dbReference type="Ensembl" id="ENSMUST00000065103.4">
    <property type="protein sequence ID" value="ENSMUSP00000066493.3"/>
    <property type="gene ID" value="ENSMUSG00000052962.4"/>
</dbReference>
<dbReference type="GeneID" id="66223"/>
<dbReference type="KEGG" id="mmu:66223"/>
<dbReference type="UCSC" id="uc009chd.2">
    <property type="organism name" value="mouse"/>
</dbReference>
<dbReference type="AGR" id="MGI:1913473"/>
<dbReference type="CTD" id="51318"/>
<dbReference type="MGI" id="MGI:1913473">
    <property type="gene designation" value="Mrpl35"/>
</dbReference>
<dbReference type="VEuPathDB" id="HostDB:ENSMUSG00000052962"/>
<dbReference type="eggNOG" id="KOG4316">
    <property type="taxonomic scope" value="Eukaryota"/>
</dbReference>
<dbReference type="GeneTree" id="ENSGT00390000007547"/>
<dbReference type="HOGENOM" id="CLU_123951_0_0_1"/>
<dbReference type="InParanoid" id="Q9CQL6"/>
<dbReference type="OMA" id="TYCSTRK"/>
<dbReference type="OrthoDB" id="5847109at2759"/>
<dbReference type="PhylomeDB" id="Q9CQL6"/>
<dbReference type="TreeFam" id="TF317642"/>
<dbReference type="Reactome" id="R-MMU-5389840">
    <property type="pathway name" value="Mitochondrial translation elongation"/>
</dbReference>
<dbReference type="Reactome" id="R-MMU-5419276">
    <property type="pathway name" value="Mitochondrial translation termination"/>
</dbReference>
<dbReference type="BioGRID-ORCS" id="66223">
    <property type="hits" value="21 hits in 78 CRISPR screens"/>
</dbReference>
<dbReference type="ChiTaRS" id="Mrpl35">
    <property type="organism name" value="mouse"/>
</dbReference>
<dbReference type="PRO" id="PR:Q9CQL6"/>
<dbReference type="Proteomes" id="UP000000589">
    <property type="component" value="Chromosome 6"/>
</dbReference>
<dbReference type="RNAct" id="Q9CQL6">
    <property type="molecule type" value="protein"/>
</dbReference>
<dbReference type="Bgee" id="ENSMUSG00000052962">
    <property type="expression patterns" value="Expressed in fetal liver hematopoietic progenitor cell and 257 other cell types or tissues"/>
</dbReference>
<dbReference type="ExpressionAtlas" id="Q9CQL6">
    <property type="expression patterns" value="baseline and differential"/>
</dbReference>
<dbReference type="GO" id="GO:0005743">
    <property type="term" value="C:mitochondrial inner membrane"/>
    <property type="evidence" value="ECO:0000303"/>
    <property type="project" value="ComplexPortal"/>
</dbReference>
<dbReference type="GO" id="GO:0005762">
    <property type="term" value="C:mitochondrial large ribosomal subunit"/>
    <property type="evidence" value="ECO:0000303"/>
    <property type="project" value="ComplexPortal"/>
</dbReference>
<dbReference type="GO" id="GO:0005739">
    <property type="term" value="C:mitochondrion"/>
    <property type="evidence" value="ECO:0007005"/>
    <property type="project" value="MGI"/>
</dbReference>
<dbReference type="GO" id="GO:0003735">
    <property type="term" value="F:structural constituent of ribosome"/>
    <property type="evidence" value="ECO:0007669"/>
    <property type="project" value="InterPro"/>
</dbReference>
<dbReference type="GO" id="GO:0032543">
    <property type="term" value="P:mitochondrial translation"/>
    <property type="evidence" value="ECO:0000303"/>
    <property type="project" value="ComplexPortal"/>
</dbReference>
<dbReference type="Gene3D" id="4.10.410.60">
    <property type="match status" value="1"/>
</dbReference>
<dbReference type="InterPro" id="IPR021137">
    <property type="entry name" value="Ribosomal_bL35-like"/>
</dbReference>
<dbReference type="InterPro" id="IPR037229">
    <property type="entry name" value="Ribosomal_bL35_sf"/>
</dbReference>
<dbReference type="InterPro" id="IPR019338">
    <property type="entry name" value="Ribosomal_bL35m"/>
</dbReference>
<dbReference type="PANTHER" id="PTHR15909">
    <property type="entry name" value="39S RIBOSOMAL PROTEIN L35, MITOCHONDRIAL"/>
    <property type="match status" value="1"/>
</dbReference>
<dbReference type="PANTHER" id="PTHR15909:SF0">
    <property type="entry name" value="LARGE RIBOSOMAL SUBUNIT PROTEIN BL35M"/>
    <property type="match status" value="1"/>
</dbReference>
<dbReference type="Pfam" id="PF01632">
    <property type="entry name" value="Ribosomal_L35p"/>
    <property type="match status" value="1"/>
</dbReference>
<dbReference type="SUPFAM" id="SSF143034">
    <property type="entry name" value="L35p-like"/>
    <property type="match status" value="1"/>
</dbReference>
<organism>
    <name type="scientific">Mus musculus</name>
    <name type="common">Mouse</name>
    <dbReference type="NCBI Taxonomy" id="10090"/>
    <lineage>
        <taxon>Eukaryota</taxon>
        <taxon>Metazoa</taxon>
        <taxon>Chordata</taxon>
        <taxon>Craniata</taxon>
        <taxon>Vertebrata</taxon>
        <taxon>Euteleostomi</taxon>
        <taxon>Mammalia</taxon>
        <taxon>Eutheria</taxon>
        <taxon>Euarchontoglires</taxon>
        <taxon>Glires</taxon>
        <taxon>Rodentia</taxon>
        <taxon>Myomorpha</taxon>
        <taxon>Muroidea</taxon>
        <taxon>Muridae</taxon>
        <taxon>Murinae</taxon>
        <taxon>Mus</taxon>
        <taxon>Mus</taxon>
    </lineage>
</organism>
<comment type="subcellular location">
    <subcellularLocation>
        <location evidence="1">Mitochondrion</location>
    </subcellularLocation>
</comment>
<comment type="similarity">
    <text evidence="3">Belongs to the bacterial ribosomal protein bL35 family.</text>
</comment>